<dbReference type="EC" id="3.2.1.114" evidence="6"/>
<dbReference type="EMBL" id="DQ029214">
    <property type="protein sequence ID" value="AAY90120.1"/>
    <property type="molecule type" value="mRNA"/>
</dbReference>
<dbReference type="EMBL" id="AL391146">
    <property type="protein sequence ID" value="CAC01814.1"/>
    <property type="molecule type" value="Genomic_DNA"/>
</dbReference>
<dbReference type="EMBL" id="CP002688">
    <property type="protein sequence ID" value="AED92095.1"/>
    <property type="molecule type" value="Genomic_DNA"/>
</dbReference>
<dbReference type="EMBL" id="AY052707">
    <property type="protein sequence ID" value="AAK96611.1"/>
    <property type="status" value="ALT_INIT"/>
    <property type="molecule type" value="mRNA"/>
</dbReference>
<dbReference type="EMBL" id="AF446883">
    <property type="protein sequence ID" value="AAL38616.1"/>
    <property type="molecule type" value="mRNA"/>
</dbReference>
<dbReference type="PIR" id="T51440">
    <property type="entry name" value="T51440"/>
</dbReference>
<dbReference type="RefSeq" id="NP_196999.1">
    <property type="nucleotide sequence ID" value="NM_121499.3"/>
</dbReference>
<dbReference type="SMR" id="Q9LFR0"/>
<dbReference type="FunCoup" id="Q9LFR0">
    <property type="interactions" value="2725"/>
</dbReference>
<dbReference type="STRING" id="3702.Q9LFR0"/>
<dbReference type="CAZy" id="GH38">
    <property type="family name" value="Glycoside Hydrolase Family 38"/>
</dbReference>
<dbReference type="GlyCosmos" id="Q9LFR0">
    <property type="glycosylation" value="9 sites, No reported glycans"/>
</dbReference>
<dbReference type="GlyGen" id="Q9LFR0">
    <property type="glycosylation" value="9 sites"/>
</dbReference>
<dbReference type="iPTMnet" id="Q9LFR0"/>
<dbReference type="SwissPalm" id="Q9LFR0"/>
<dbReference type="PaxDb" id="3702-AT5G14950.1"/>
<dbReference type="ProteomicsDB" id="247369"/>
<dbReference type="EnsemblPlants" id="AT5G14950.1">
    <property type="protein sequence ID" value="AT5G14950.1"/>
    <property type="gene ID" value="AT5G14950"/>
</dbReference>
<dbReference type="GeneID" id="831347"/>
<dbReference type="Gramene" id="AT5G14950.1">
    <property type="protein sequence ID" value="AT5G14950.1"/>
    <property type="gene ID" value="AT5G14950"/>
</dbReference>
<dbReference type="KEGG" id="ath:AT5G14950"/>
<dbReference type="Araport" id="AT5G14950"/>
<dbReference type="TAIR" id="AT5G14950">
    <property type="gene designation" value="GMII"/>
</dbReference>
<dbReference type="eggNOG" id="KOG1958">
    <property type="taxonomic scope" value="Eukaryota"/>
</dbReference>
<dbReference type="HOGENOM" id="CLU_004690_1_0_1"/>
<dbReference type="InParanoid" id="Q9LFR0"/>
<dbReference type="OMA" id="CPWGQHP"/>
<dbReference type="PhylomeDB" id="Q9LFR0"/>
<dbReference type="BioCyc" id="ARA:AT5G14950-MONOMER"/>
<dbReference type="BioCyc" id="MetaCyc:AT5G14950-MONOMER"/>
<dbReference type="BRENDA" id="3.2.1.114">
    <property type="organism ID" value="399"/>
</dbReference>
<dbReference type="UniPathway" id="UPA00378"/>
<dbReference type="PRO" id="PR:Q9LFR0"/>
<dbReference type="Proteomes" id="UP000006548">
    <property type="component" value="Chromosome 5"/>
</dbReference>
<dbReference type="ExpressionAtlas" id="Q9LFR0">
    <property type="expression patterns" value="baseline and differential"/>
</dbReference>
<dbReference type="GO" id="GO:0005768">
    <property type="term" value="C:endosome"/>
    <property type="evidence" value="ECO:0007005"/>
    <property type="project" value="TAIR"/>
</dbReference>
<dbReference type="GO" id="GO:0005794">
    <property type="term" value="C:Golgi apparatus"/>
    <property type="evidence" value="ECO:0000314"/>
    <property type="project" value="TAIR"/>
</dbReference>
<dbReference type="GO" id="GO:0000137">
    <property type="term" value="C:Golgi cis cisterna"/>
    <property type="evidence" value="ECO:0007005"/>
    <property type="project" value="TAIR"/>
</dbReference>
<dbReference type="GO" id="GO:0000139">
    <property type="term" value="C:Golgi membrane"/>
    <property type="evidence" value="ECO:0007669"/>
    <property type="project" value="UniProtKB-SubCell"/>
</dbReference>
<dbReference type="GO" id="GO:0005802">
    <property type="term" value="C:trans-Golgi network"/>
    <property type="evidence" value="ECO:0007005"/>
    <property type="project" value="TAIR"/>
</dbReference>
<dbReference type="GO" id="GO:0004559">
    <property type="term" value="F:alpha-mannosidase activity"/>
    <property type="evidence" value="ECO:0000314"/>
    <property type="project" value="TAIR"/>
</dbReference>
<dbReference type="GO" id="GO:0030246">
    <property type="term" value="F:carbohydrate binding"/>
    <property type="evidence" value="ECO:0007669"/>
    <property type="project" value="InterPro"/>
</dbReference>
<dbReference type="GO" id="GO:0004572">
    <property type="term" value="F:mannosyl-oligosaccharide 1,3-1,6-alpha-mannosidase activity"/>
    <property type="evidence" value="ECO:0007669"/>
    <property type="project" value="UniProtKB-EC"/>
</dbReference>
<dbReference type="GO" id="GO:0046872">
    <property type="term" value="F:metal ion binding"/>
    <property type="evidence" value="ECO:0007669"/>
    <property type="project" value="UniProtKB-KW"/>
</dbReference>
<dbReference type="GO" id="GO:0042538">
    <property type="term" value="P:hyperosmotic salinity response"/>
    <property type="evidence" value="ECO:0000315"/>
    <property type="project" value="UniProtKB"/>
</dbReference>
<dbReference type="GO" id="GO:0006013">
    <property type="term" value="P:mannose metabolic process"/>
    <property type="evidence" value="ECO:0007669"/>
    <property type="project" value="InterPro"/>
</dbReference>
<dbReference type="GO" id="GO:0006487">
    <property type="term" value="P:protein N-linked glycosylation"/>
    <property type="evidence" value="ECO:0000314"/>
    <property type="project" value="TAIR"/>
</dbReference>
<dbReference type="CDD" id="cd10809">
    <property type="entry name" value="GH38N_AMII_GMII_SfManIII_like"/>
    <property type="match status" value="1"/>
</dbReference>
<dbReference type="FunFam" id="1.20.1270.50:FF:000001">
    <property type="entry name" value="Alpha-mannosidase"/>
    <property type="match status" value="1"/>
</dbReference>
<dbReference type="FunFam" id="2.70.98.30:FF:000007">
    <property type="entry name" value="Alpha-mannosidase"/>
    <property type="match status" value="1"/>
</dbReference>
<dbReference type="FunFam" id="3.20.110.10:FF:000005">
    <property type="entry name" value="Alpha-mannosidase"/>
    <property type="match status" value="1"/>
</dbReference>
<dbReference type="FunFam" id="2.60.40.1180:FF:000019">
    <property type="entry name" value="Alpha-mannosidase 2"/>
    <property type="match status" value="1"/>
</dbReference>
<dbReference type="Gene3D" id="3.20.110.10">
    <property type="entry name" value="Glycoside hydrolase 38, N terminal domain"/>
    <property type="match status" value="1"/>
</dbReference>
<dbReference type="Gene3D" id="1.20.1270.50">
    <property type="entry name" value="Glycoside hydrolase family 38, central domain"/>
    <property type="match status" value="1"/>
</dbReference>
<dbReference type="Gene3D" id="2.60.40.1180">
    <property type="entry name" value="Golgi alpha-mannosidase II"/>
    <property type="match status" value="1"/>
</dbReference>
<dbReference type="Gene3D" id="2.70.98.30">
    <property type="entry name" value="Golgi alpha-mannosidase II, domain 4"/>
    <property type="match status" value="1"/>
</dbReference>
<dbReference type="InterPro" id="IPR011013">
    <property type="entry name" value="Gal_mutarotase_sf_dom"/>
</dbReference>
<dbReference type="InterPro" id="IPR011330">
    <property type="entry name" value="Glyco_hydro/deAcase_b/a-brl"/>
</dbReference>
<dbReference type="InterPro" id="IPR011682">
    <property type="entry name" value="Glyco_hydro_38_C"/>
</dbReference>
<dbReference type="InterPro" id="IPR015341">
    <property type="entry name" value="Glyco_hydro_38_cen"/>
</dbReference>
<dbReference type="InterPro" id="IPR037094">
    <property type="entry name" value="Glyco_hydro_38_cen_sf"/>
</dbReference>
<dbReference type="InterPro" id="IPR000602">
    <property type="entry name" value="Glyco_hydro_38_N"/>
</dbReference>
<dbReference type="InterPro" id="IPR027291">
    <property type="entry name" value="Glyco_hydro_38_N_sf"/>
</dbReference>
<dbReference type="InterPro" id="IPR028995">
    <property type="entry name" value="Glyco_hydro_57/38_cen_sf"/>
</dbReference>
<dbReference type="InterPro" id="IPR013780">
    <property type="entry name" value="Glyco_hydro_b"/>
</dbReference>
<dbReference type="InterPro" id="IPR050843">
    <property type="entry name" value="Glycosyl_Hydrlase_38"/>
</dbReference>
<dbReference type="PANTHER" id="PTHR11607">
    <property type="entry name" value="ALPHA-MANNOSIDASE"/>
    <property type="match status" value="1"/>
</dbReference>
<dbReference type="PANTHER" id="PTHR11607:SF3">
    <property type="entry name" value="LYSOSOMAL ALPHA-MANNOSIDASE"/>
    <property type="match status" value="1"/>
</dbReference>
<dbReference type="Pfam" id="PF09261">
    <property type="entry name" value="Alpha-mann_mid"/>
    <property type="match status" value="1"/>
</dbReference>
<dbReference type="Pfam" id="PF07748">
    <property type="entry name" value="Glyco_hydro_38C"/>
    <property type="match status" value="1"/>
</dbReference>
<dbReference type="Pfam" id="PF01074">
    <property type="entry name" value="Glyco_hydro_38N"/>
    <property type="match status" value="1"/>
</dbReference>
<dbReference type="SMART" id="SM00872">
    <property type="entry name" value="Alpha-mann_mid"/>
    <property type="match status" value="1"/>
</dbReference>
<dbReference type="SUPFAM" id="SSF88688">
    <property type="entry name" value="Families 57/38 glycoside transferase middle domain"/>
    <property type="match status" value="1"/>
</dbReference>
<dbReference type="SUPFAM" id="SSF74650">
    <property type="entry name" value="Galactose mutarotase-like"/>
    <property type="match status" value="1"/>
</dbReference>
<dbReference type="SUPFAM" id="SSF88713">
    <property type="entry name" value="Glycoside hydrolase/deacetylase"/>
    <property type="match status" value="1"/>
</dbReference>
<keyword id="KW-1015">Disulfide bond</keyword>
<keyword id="KW-0325">Glycoprotein</keyword>
<keyword id="KW-0326">Glycosidase</keyword>
<keyword id="KW-0333">Golgi apparatus</keyword>
<keyword id="KW-0378">Hydrolase</keyword>
<keyword id="KW-0472">Membrane</keyword>
<keyword id="KW-0479">Metal-binding</keyword>
<keyword id="KW-1185">Reference proteome</keyword>
<keyword id="KW-0735">Signal-anchor</keyword>
<keyword id="KW-0812">Transmembrane</keyword>
<keyword id="KW-1133">Transmembrane helix</keyword>
<keyword id="KW-0862">Zinc</keyword>
<sequence>MPFSSYIGNSRRSSTGGGTGGWGQSLLPTALSKSKLAINRKPRKRTLVVNFIFANFFVIALTVSLLFFLLTLFHFGVPGPISSRFLTSRSNRIVKPRKNINRRPLNDSNSGAVVDITTKDLYDRIEFLDTDGGPWKQGWRVTYKDDEWEKEKLKIFVVPHSHNDPGWKLTVEEYYQRQSRHILDTIVETLSKDSRRKFIWEEMSYLERWWRDASPNKQEALTKLVKDGQLEIVGGGWVMNDEANSHYFAIIEQIAEGNMWLNDTIGVIPKNSWAIDPFGYSSTMAYLLRRMGFENMLIQRTHYELKKDLAQHKNLEYIWRQSWDAMETTDIFVHMMPFYSYDIPHTCGPEPAICCQFDFARMRGFKYELCPWGKHPVETTLENVQERALKLLDQYRKKSTLYRTNTLLIPLGDDFRYISIDEAEAQFRNYQMLFDHINSNPSLNAEAKFGTLEDYFRTVREEADRVNYSRPGEVGSGQVVGFPSLSGDFFTYADRQQDYWSGYYVSRPFFKAVDRVLEHTLRGAEIMMSFLLGYCHRIQCEKFPTSFTYKLTAARRNLALFQHHDGVTGTAKDYVVQDYGTRMHTSLQDLQIFMSKAIEVLLGIRHEKEKSDQSPSFFEAEQMRSKYDARPVHKPIAAREGNSHTVILFNPSEQTREEVVTVVVNRAEISVLDSNWTCVPSQISPEVQHDDTKLFTGRHRLYWKASIPALGLRTYFIANGNVECEKATPSKLKYASEFDPFPCPPPYSCSKLDNDVTEIRNEHQTLVFDVKNGSLRKIVHRNGSETVVGEEIGMYSSPESGAYLFKPDGEAQPIVQPDGHVVTSEGLLVQEVFSYPKTKWEKSPLSQKTRLYTGGNTLQDQVVEIEYHVELLGNDFDDRELIVRYKTDVDNKKVFYSDLNGFQMSRRETYDKIPLQGNYYPMPSLAFIQGSNGQRFSVHSRQSLGVASLKEGWLEIMLDRRLVRDDGRGLGQGVMDNRAMTVVFHLLAESNISQADPASNTNPRNPSLLSHLIGAHLNYPINTFIAKKPQDISVRVPQYGSFAPLAKPLPCDLHIVNFKVPRPSKYSQQLEEDKPRFALILNRRAWDSAYCHKGRQVNCTSMANEPVNFSDMFKDLAASKVKPTSLNLLQEDMEILGYDDQELPRDSSQPREGRVSISPMEIRAYKLELRPHK</sequence>
<feature type="chain" id="PRO_0000432115" description="Alpha-mannosidase 2">
    <location>
        <begin position="1"/>
        <end position="1173"/>
    </location>
</feature>
<feature type="topological domain" description="Cytoplasmic" evidence="12">
    <location>
        <begin position="1"/>
        <end position="50"/>
    </location>
</feature>
<feature type="transmembrane region" description="Helical; Signal-anchor" evidence="3">
    <location>
        <begin position="51"/>
        <end position="71"/>
    </location>
</feature>
<feature type="topological domain" description="Lumenal" evidence="12">
    <location>
        <begin position="72"/>
        <end position="1173"/>
    </location>
</feature>
<feature type="region of interest" description="Disordered" evidence="5">
    <location>
        <begin position="1"/>
        <end position="21"/>
    </location>
</feature>
<feature type="active site" description="Nucleophile" evidence="2">
    <location>
        <position position="276"/>
    </location>
</feature>
<feature type="binding site" evidence="2">
    <location>
        <position position="162"/>
    </location>
    <ligand>
        <name>Zn(2+)</name>
        <dbReference type="ChEBI" id="CHEBI:29105"/>
    </ligand>
</feature>
<feature type="binding site" evidence="2">
    <location>
        <position position="164"/>
    </location>
    <ligand>
        <name>Zn(2+)</name>
        <dbReference type="ChEBI" id="CHEBI:29105"/>
    </ligand>
</feature>
<feature type="binding site" evidence="2">
    <location>
        <position position="276"/>
    </location>
    <ligand>
        <name>Zn(2+)</name>
        <dbReference type="ChEBI" id="CHEBI:29105"/>
    </ligand>
</feature>
<feature type="binding site" evidence="2">
    <location>
        <position position="564"/>
    </location>
    <ligand>
        <name>Zn(2+)</name>
        <dbReference type="ChEBI" id="CHEBI:29105"/>
    </ligand>
</feature>
<feature type="glycosylation site" description="N-linked (GlcNAc...) asparagine" evidence="4">
    <location>
        <position position="106"/>
    </location>
</feature>
<feature type="glycosylation site" description="N-linked (GlcNAc...) asparagine" evidence="4">
    <location>
        <position position="262"/>
    </location>
</feature>
<feature type="glycosylation site" description="N-linked (GlcNAc...) asparagine" evidence="4">
    <location>
        <position position="467"/>
    </location>
</feature>
<feature type="glycosylation site" description="N-linked (GlcNAc...) asparagine" evidence="4">
    <location>
        <position position="675"/>
    </location>
</feature>
<feature type="glycosylation site" description="N-linked (GlcNAc...) asparagine" evidence="4">
    <location>
        <position position="772"/>
    </location>
</feature>
<feature type="glycosylation site" description="N-linked (GlcNAc...) asparagine" evidence="4">
    <location>
        <position position="782"/>
    </location>
</feature>
<feature type="glycosylation site" description="N-linked (GlcNAc...) asparagine" evidence="4">
    <location>
        <position position="991"/>
    </location>
</feature>
<feature type="glycosylation site" description="N-linked (GlcNAc...) asparagine" evidence="4">
    <location>
        <position position="1098"/>
    </location>
</feature>
<feature type="glycosylation site" description="N-linked (GlcNAc...) asparagine" evidence="4">
    <location>
        <position position="1108"/>
    </location>
</feature>
<accession>Q9LFR0</accession>
<accession>Q940T6</accession>
<proteinExistence type="evidence at protein level"/>
<evidence type="ECO:0000250" key="1">
    <source>
        <dbReference type="UniProtKB" id="P28494"/>
    </source>
</evidence>
<evidence type="ECO:0000250" key="2">
    <source>
        <dbReference type="UniProtKB" id="Q29451"/>
    </source>
</evidence>
<evidence type="ECO:0000255" key="3"/>
<evidence type="ECO:0000255" key="4">
    <source>
        <dbReference type="PROSITE-ProRule" id="PRU00498"/>
    </source>
</evidence>
<evidence type="ECO:0000256" key="5">
    <source>
        <dbReference type="SAM" id="MobiDB-lite"/>
    </source>
</evidence>
<evidence type="ECO:0000269" key="6">
    <source>
    </source>
</evidence>
<evidence type="ECO:0000269" key="7">
    <source>
    </source>
</evidence>
<evidence type="ECO:0000269" key="8">
    <source>
    </source>
</evidence>
<evidence type="ECO:0000269" key="9">
    <source>
    </source>
</evidence>
<evidence type="ECO:0000303" key="10">
    <source>
    </source>
</evidence>
<evidence type="ECO:0000303" key="11">
    <source>
    </source>
</evidence>
<evidence type="ECO:0000305" key="12"/>
<evidence type="ECO:0000312" key="13">
    <source>
        <dbReference type="Araport" id="AT5G14950"/>
    </source>
</evidence>
<evidence type="ECO:0000312" key="14">
    <source>
        <dbReference type="EMBL" id="CAC01814.1"/>
    </source>
</evidence>
<evidence type="ECO:0000312" key="15">
    <source>
        <dbReference type="Proteomes" id="UP000006548"/>
    </source>
</evidence>
<reference key="1">
    <citation type="journal article" date="2006" name="Plant J.">
        <title>Molecular cloning and characterization of Arabidopsis thaliana Golgi alpha-mannosidase II, a key enzyme in the formation of complex N-glycans in plants.</title>
        <authorList>
            <person name="Strasser R."/>
            <person name="Schoberer J."/>
            <person name="Jin C."/>
            <person name="Glossl J."/>
            <person name="Mach L."/>
            <person name="Steinkellner H."/>
        </authorList>
    </citation>
    <scope>NUCLEOTIDE SEQUENCE [MRNA]</scope>
    <scope>FUNCTION</scope>
    <scope>DISRUPTION PHENOTYPE</scope>
    <scope>CATALYTIC ACTIVITY</scope>
    <scope>SUBCELLULAR LOCATION</scope>
    <scope>COFACTOR</scope>
    <scope>PATHWAY</scope>
    <scope>ACTIVITY REGULATION</scope>
    <source>
        <strain>cv. Columbia</strain>
    </source>
</reference>
<reference key="2">
    <citation type="journal article" date="2000" name="Nature">
        <title>Sequence and analysis of chromosome 5 of the plant Arabidopsis thaliana.</title>
        <authorList>
            <person name="Tabata S."/>
            <person name="Kaneko T."/>
            <person name="Nakamura Y."/>
            <person name="Kotani H."/>
            <person name="Kato T."/>
            <person name="Asamizu E."/>
            <person name="Miyajima N."/>
            <person name="Sasamoto S."/>
            <person name="Kimura T."/>
            <person name="Hosouchi T."/>
            <person name="Kawashima K."/>
            <person name="Kohara M."/>
            <person name="Matsumoto M."/>
            <person name="Matsuno A."/>
            <person name="Muraki A."/>
            <person name="Nakayama S."/>
            <person name="Nakazaki N."/>
            <person name="Naruo K."/>
            <person name="Okumura S."/>
            <person name="Shinpo S."/>
            <person name="Takeuchi C."/>
            <person name="Wada T."/>
            <person name="Watanabe A."/>
            <person name="Yamada M."/>
            <person name="Yasuda M."/>
            <person name="Sato S."/>
            <person name="de la Bastide M."/>
            <person name="Huang E."/>
            <person name="Spiegel L."/>
            <person name="Gnoj L."/>
            <person name="O'Shaughnessy A."/>
            <person name="Preston R."/>
            <person name="Habermann K."/>
            <person name="Murray J."/>
            <person name="Johnson D."/>
            <person name="Rohlfing T."/>
            <person name="Nelson J."/>
            <person name="Stoneking T."/>
            <person name="Pepin K."/>
            <person name="Spieth J."/>
            <person name="Sekhon M."/>
            <person name="Armstrong J."/>
            <person name="Becker M."/>
            <person name="Belter E."/>
            <person name="Cordum H."/>
            <person name="Cordes M."/>
            <person name="Courtney L."/>
            <person name="Courtney W."/>
            <person name="Dante M."/>
            <person name="Du H."/>
            <person name="Edwards J."/>
            <person name="Fryman J."/>
            <person name="Haakensen B."/>
            <person name="Lamar E."/>
            <person name="Latreille P."/>
            <person name="Leonard S."/>
            <person name="Meyer R."/>
            <person name="Mulvaney E."/>
            <person name="Ozersky P."/>
            <person name="Riley A."/>
            <person name="Strowmatt C."/>
            <person name="Wagner-McPherson C."/>
            <person name="Wollam A."/>
            <person name="Yoakum M."/>
            <person name="Bell M."/>
            <person name="Dedhia N."/>
            <person name="Parnell L."/>
            <person name="Shah R."/>
            <person name="Rodriguez M."/>
            <person name="Hoon See L."/>
            <person name="Vil D."/>
            <person name="Baker J."/>
            <person name="Kirchoff K."/>
            <person name="Toth K."/>
            <person name="King L."/>
            <person name="Bahret A."/>
            <person name="Miller B."/>
            <person name="Marra M.A."/>
            <person name="Martienssen R."/>
            <person name="McCombie W.R."/>
            <person name="Wilson R.K."/>
            <person name="Murphy G."/>
            <person name="Bancroft I."/>
            <person name="Volckaert G."/>
            <person name="Wambutt R."/>
            <person name="Duesterhoeft A."/>
            <person name="Stiekema W."/>
            <person name="Pohl T."/>
            <person name="Entian K.-D."/>
            <person name="Terryn N."/>
            <person name="Hartley N."/>
            <person name="Bent E."/>
            <person name="Johnson S."/>
            <person name="Langham S.-A."/>
            <person name="McCullagh B."/>
            <person name="Robben J."/>
            <person name="Grymonprez B."/>
            <person name="Zimmermann W."/>
            <person name="Ramsperger U."/>
            <person name="Wedler H."/>
            <person name="Balke K."/>
            <person name="Wedler E."/>
            <person name="Peters S."/>
            <person name="van Staveren M."/>
            <person name="Dirkse W."/>
            <person name="Mooijman P."/>
            <person name="Klein Lankhorst R."/>
            <person name="Weitzenegger T."/>
            <person name="Bothe G."/>
            <person name="Rose M."/>
            <person name="Hauf J."/>
            <person name="Berneiser S."/>
            <person name="Hempel S."/>
            <person name="Feldpausch M."/>
            <person name="Lamberth S."/>
            <person name="Villarroel R."/>
            <person name="Gielen J."/>
            <person name="Ardiles W."/>
            <person name="Bents O."/>
            <person name="Lemcke K."/>
            <person name="Kolesov G."/>
            <person name="Mayer K.F.X."/>
            <person name="Rudd S."/>
            <person name="Schoof H."/>
            <person name="Schueller C."/>
            <person name="Zaccaria P."/>
            <person name="Mewes H.-W."/>
            <person name="Bevan M."/>
            <person name="Fransz P.F."/>
        </authorList>
    </citation>
    <scope>NUCLEOTIDE SEQUENCE [LARGE SCALE GENOMIC DNA]</scope>
    <source>
        <strain>cv. Columbia</strain>
    </source>
</reference>
<reference key="3">
    <citation type="journal article" date="2017" name="Plant J.">
        <title>Araport11: a complete reannotation of the Arabidopsis thaliana reference genome.</title>
        <authorList>
            <person name="Cheng C.Y."/>
            <person name="Krishnakumar V."/>
            <person name="Chan A.P."/>
            <person name="Thibaud-Nissen F."/>
            <person name="Schobel S."/>
            <person name="Town C.D."/>
        </authorList>
    </citation>
    <scope>GENOME REANNOTATION</scope>
    <source>
        <strain>cv. Columbia</strain>
    </source>
</reference>
<reference key="4">
    <citation type="journal article" date="2003" name="Science">
        <title>Empirical analysis of transcriptional activity in the Arabidopsis genome.</title>
        <authorList>
            <person name="Yamada K."/>
            <person name="Lim J."/>
            <person name="Dale J.M."/>
            <person name="Chen H."/>
            <person name="Shinn P."/>
            <person name="Palm C.J."/>
            <person name="Southwick A.M."/>
            <person name="Wu H.C."/>
            <person name="Kim C.J."/>
            <person name="Nguyen M."/>
            <person name="Pham P.K."/>
            <person name="Cheuk R.F."/>
            <person name="Karlin-Newmann G."/>
            <person name="Liu S.X."/>
            <person name="Lam B."/>
            <person name="Sakano H."/>
            <person name="Wu T."/>
            <person name="Yu G."/>
            <person name="Miranda M."/>
            <person name="Quach H.L."/>
            <person name="Tripp M."/>
            <person name="Chang C.H."/>
            <person name="Lee J.M."/>
            <person name="Toriumi M.J."/>
            <person name="Chan M.M."/>
            <person name="Tang C.C."/>
            <person name="Onodera C.S."/>
            <person name="Deng J.M."/>
            <person name="Akiyama K."/>
            <person name="Ansari Y."/>
            <person name="Arakawa T."/>
            <person name="Banh J."/>
            <person name="Banno F."/>
            <person name="Bowser L."/>
            <person name="Brooks S.Y."/>
            <person name="Carninci P."/>
            <person name="Chao Q."/>
            <person name="Choy N."/>
            <person name="Enju A."/>
            <person name="Goldsmith A.D."/>
            <person name="Gurjal M."/>
            <person name="Hansen N.F."/>
            <person name="Hayashizaki Y."/>
            <person name="Johnson-Hopson C."/>
            <person name="Hsuan V.W."/>
            <person name="Iida K."/>
            <person name="Karnes M."/>
            <person name="Khan S."/>
            <person name="Koesema E."/>
            <person name="Ishida J."/>
            <person name="Jiang P.X."/>
            <person name="Jones T."/>
            <person name="Kawai J."/>
            <person name="Kamiya A."/>
            <person name="Meyers C."/>
            <person name="Nakajima M."/>
            <person name="Narusaka M."/>
            <person name="Seki M."/>
            <person name="Sakurai T."/>
            <person name="Satou M."/>
            <person name="Tamse R."/>
            <person name="Vaysberg M."/>
            <person name="Wallender E.K."/>
            <person name="Wong C."/>
            <person name="Yamamura Y."/>
            <person name="Yuan S."/>
            <person name="Shinozaki K."/>
            <person name="Davis R.W."/>
            <person name="Theologis A."/>
            <person name="Ecker J.R."/>
        </authorList>
    </citation>
    <scope>NUCLEOTIDE SEQUENCE [LARGE SCALE MRNA]</scope>
    <source>
        <strain>cv. Columbia</strain>
    </source>
</reference>
<reference key="5">
    <citation type="journal article" date="2008" name="Proc. Natl. Acad. Sci. U.S.A.">
        <title>Salt tolerance of Arabidopsis thaliana requires maturation of N-glycosylated proteins in the Golgi apparatus.</title>
        <authorList>
            <person name="Kang J.S."/>
            <person name="Frank J."/>
            <person name="Kang C.H."/>
            <person name="Kajiura H."/>
            <person name="Vikram M."/>
            <person name="Ueda A."/>
            <person name="Kim S."/>
            <person name="Bahk J.D."/>
            <person name="Triplett B."/>
            <person name="Fujiyama K."/>
            <person name="Lee S.Y."/>
            <person name="von Schaewen A."/>
            <person name="Koiwa H."/>
        </authorList>
    </citation>
    <scope>FUNCTION</scope>
    <scope>DISRUPTION PHENOTYPE</scope>
</reference>
<reference key="6">
    <citation type="journal article" date="2011" name="J. Biol. Chem.">
        <title>Reduced immunogenicity of Arabidopsis hgl1 mutant N-glycans caused by altered accessibility of xylose and core fucose epitopes.</title>
        <authorList>
            <person name="Kaulfurst-Soboll H."/>
            <person name="Rips S."/>
            <person name="Koiwa H."/>
            <person name="Kajiura H."/>
            <person name="Fujiyama K."/>
            <person name="von Schaewen A."/>
        </authorList>
    </citation>
    <scope>FUNCTION</scope>
    <scope>DISRUPTION PHENOTYPE</scope>
    <scope>CATALYTIC ACTIVITY</scope>
    <scope>PATHWAY</scope>
</reference>
<reference key="7">
    <citation type="journal article" date="2013" name="Plant Physiol.">
        <title>Time-resolved fluorescence imaging reveals differential interactions of N-glycan processing enzymes across the Golgi stack in planta.</title>
        <authorList>
            <person name="Schoberer J."/>
            <person name="Liebminger E."/>
            <person name="Botchway S.W."/>
            <person name="Strasser R."/>
            <person name="Hawes C."/>
        </authorList>
    </citation>
    <scope>INTERACTION WITH GALT1</scope>
</reference>
<organism evidence="15">
    <name type="scientific">Arabidopsis thaliana</name>
    <name type="common">Mouse-ear cress</name>
    <dbReference type="NCBI Taxonomy" id="3702"/>
    <lineage>
        <taxon>Eukaryota</taxon>
        <taxon>Viridiplantae</taxon>
        <taxon>Streptophyta</taxon>
        <taxon>Embryophyta</taxon>
        <taxon>Tracheophyta</taxon>
        <taxon>Spermatophyta</taxon>
        <taxon>Magnoliopsida</taxon>
        <taxon>eudicotyledons</taxon>
        <taxon>Gunneridae</taxon>
        <taxon>Pentapetalae</taxon>
        <taxon>rosids</taxon>
        <taxon>malvids</taxon>
        <taxon>Brassicales</taxon>
        <taxon>Brassicaceae</taxon>
        <taxon>Camelineae</taxon>
        <taxon>Arabidopsis</taxon>
    </lineage>
</organism>
<name>GMAN2_ARATH</name>
<comment type="function">
    <text evidence="6 7 8">Catalyzes the first committed step in the biosynthesis of complex N-glycans. It controls conversion of high mannose to complex N-glycans; the final hydrolytic step in the N-glycan maturation pathway. Converts GlcNAcMan(5)GlcNAc(2) (Man5Gn) into GlcNAcMan(3)GlcNAc(2) (MGn) by sequential removal of two alpha1,6- and alpha1,3-linked mannose residues from the alpha1,6-mannose branch of the substrate. To a lesser extent, also able to cleave beta1,2-xylosylated Man5Gn-glycopeptide (Man5GnX-GP) and pyridylaminated substrates Man5Gn-PA and Man5GnX-PA, but not active toward Man5-glycopeptide (PubMed:16460512, PubMed:21478158). Required for resistance to salt stress (PubMed:18408158).</text>
</comment>
<comment type="catalytic activity">
    <reaction evidence="6">
        <text>N(4)-{beta-D-GlcNAc-(1-&gt;2)-alpha-D-Man-(1-&gt;3)-[alpha-D-Man-(1-&gt;3)-[alpha-D-Man-(1-&gt;6)]-alpha-D-Man-(1-&gt;6)]-beta-D-Man-(1-&gt;4)-beta-D-GlcNAc-(1-&gt;4)-beta-D-GlcNAc}-L-asparaginyl-[protein] + 2 H2O = 2 alpha-D-mannopyranose + an N(4)-{beta-D-GlcNAc-(1-&gt;2)-alpha-D-Man-(1-&gt;3)-[alpha-D-Man-(1-&gt;6)]-beta-D-Man-(1-&gt;4)-beta-D-GlcNAc-(1-&gt;4)-beta-D-GlcNAc}-L-asparaginyl-[protein]</text>
        <dbReference type="Rhea" id="RHEA:56052"/>
        <dbReference type="Rhea" id="RHEA-COMP:14368"/>
        <dbReference type="Rhea" id="RHEA-COMP:14369"/>
        <dbReference type="ChEBI" id="CHEBI:15377"/>
        <dbReference type="ChEBI" id="CHEBI:28729"/>
        <dbReference type="ChEBI" id="CHEBI:60615"/>
        <dbReference type="ChEBI" id="CHEBI:60625"/>
        <dbReference type="EC" id="3.2.1.114"/>
    </reaction>
</comment>
<comment type="cofactor">
    <cofactor evidence="6">
        <name>Zn(2+)</name>
        <dbReference type="ChEBI" id="CHEBI:29105"/>
    </cofactor>
    <text evidence="6">Binds 1 zinc ion per subunit. Not sensitive to EDTA and not significantly stimulated by cations such as Ca(2+), Co(2+), Mn(2+), Ni(2+) or Zn(2+) (PubMed:16460512).</text>
</comment>
<comment type="activity regulation">
    <text evidence="6">Inhibited by 1 mM Cu(2+) and by the class II alpha-mannosidase inhibitor swainsonine.</text>
</comment>
<comment type="pathway">
    <text evidence="6 8">Protein modification; protein glycosylation.</text>
</comment>
<comment type="subunit">
    <text evidence="1 9">Homodimer; disulfide-linked (By similarity). Interacts with GALT1 (PubMed:23400704).</text>
</comment>
<comment type="subcellular location">
    <subcellularLocation>
        <location evidence="6">Golgi apparatus membrane</location>
        <topology evidence="6">Single-pass type II membrane protein</topology>
    </subcellularLocation>
</comment>
<comment type="PTM">
    <text evidence="1">Glycosylated.</text>
</comment>
<comment type="disruption phenotype">
    <text evidence="6 7 8">Predominant presence of unprocessed hybrid N-glycans (PubMed:16460512). Reduced levels of glycoprotein N-glycans (PubMed:21478158). Increased sensitivity to salt stress (PubMed:18408158).</text>
</comment>
<comment type="similarity">
    <text evidence="12">Belongs to the glycosyl hydrolase 38 family.</text>
</comment>
<comment type="sequence caution" evidence="12">
    <conflict type="erroneous initiation">
        <sequence resource="EMBL-CDS" id="AAK96611"/>
    </conflict>
    <text>Truncated N-terminus.</text>
</comment>
<protein>
    <recommendedName>
        <fullName evidence="10">Alpha-mannosidase 2</fullName>
        <ecNumber evidence="6">3.2.1.114</ecNumber>
    </recommendedName>
    <alternativeName>
        <fullName evidence="10">Golgi alpha-mannosidase II</fullName>
        <shortName>AMan II</shortName>
        <shortName evidence="10">AtGMII</shortName>
        <shortName>Man II</shortName>
    </alternativeName>
    <alternativeName>
        <fullName evidence="11">Protein hybrid glycosylation 1</fullName>
    </alternativeName>
</protein>
<gene>
    <name evidence="10" type="primary">GMII</name>
    <name evidence="11" type="synonym">HGL1</name>
    <name evidence="13" type="ordered locus">At5g14950</name>
    <name evidence="14" type="ORF">F2G14.70</name>
</gene>